<gene>
    <name evidence="1" type="primary">prmA</name>
    <name type="ordered locus">Cla_1260</name>
</gene>
<keyword id="KW-0963">Cytoplasm</keyword>
<keyword id="KW-0489">Methyltransferase</keyword>
<keyword id="KW-1185">Reference proteome</keyword>
<keyword id="KW-0949">S-adenosyl-L-methionine</keyword>
<keyword id="KW-0808">Transferase</keyword>
<sequence>MQTHYYELFFQTDKEYLDLFLDLVFSLDIDAIEEKNDGVYIRSEEDIKLIQIALQSFHQRLCEKFNTKIYFHSTLEKKENKNWIEEYKKGIQALTIDNIHIHTTWQKPKQDKINIIIDPALAFGSGHHESTYTCIEFLQKYTDGSKFCLDVGCGSGILSIIMAKLGAKVQACDTDELAIVASKENAKLNRVSFNDIWVGSVNKSLHKYDIVVANIIADILIILEKDLKEKTKEGGILILSGILNKYEDRIKDKFKDLTLLETKYKGEWLSLAYKKETK</sequence>
<evidence type="ECO:0000255" key="1">
    <source>
        <dbReference type="HAMAP-Rule" id="MF_00735"/>
    </source>
</evidence>
<accession>B9KDE1</accession>
<dbReference type="EC" id="2.1.1.-" evidence="1"/>
<dbReference type="EMBL" id="CP000932">
    <property type="protein sequence ID" value="ACM64580.1"/>
    <property type="molecule type" value="Genomic_DNA"/>
</dbReference>
<dbReference type="RefSeq" id="WP_012661963.1">
    <property type="nucleotide sequence ID" value="NC_012039.1"/>
</dbReference>
<dbReference type="SMR" id="B9KDE1"/>
<dbReference type="STRING" id="306263.Cla_1260"/>
<dbReference type="KEGG" id="cla:CLA_1260"/>
<dbReference type="PATRIC" id="fig|306263.5.peg.1247"/>
<dbReference type="eggNOG" id="COG2264">
    <property type="taxonomic scope" value="Bacteria"/>
</dbReference>
<dbReference type="HOGENOM" id="CLU_049382_1_0_7"/>
<dbReference type="Proteomes" id="UP000007727">
    <property type="component" value="Chromosome"/>
</dbReference>
<dbReference type="GO" id="GO:0005737">
    <property type="term" value="C:cytoplasm"/>
    <property type="evidence" value="ECO:0007669"/>
    <property type="project" value="UniProtKB-SubCell"/>
</dbReference>
<dbReference type="GO" id="GO:0016279">
    <property type="term" value="F:protein-lysine N-methyltransferase activity"/>
    <property type="evidence" value="ECO:0007669"/>
    <property type="project" value="RHEA"/>
</dbReference>
<dbReference type="GO" id="GO:0032259">
    <property type="term" value="P:methylation"/>
    <property type="evidence" value="ECO:0007669"/>
    <property type="project" value="UniProtKB-KW"/>
</dbReference>
<dbReference type="CDD" id="cd02440">
    <property type="entry name" value="AdoMet_MTases"/>
    <property type="match status" value="1"/>
</dbReference>
<dbReference type="Gene3D" id="3.40.50.150">
    <property type="entry name" value="Vaccinia Virus protein VP39"/>
    <property type="match status" value="1"/>
</dbReference>
<dbReference type="HAMAP" id="MF_00735">
    <property type="entry name" value="Methyltr_PrmA"/>
    <property type="match status" value="1"/>
</dbReference>
<dbReference type="InterPro" id="IPR050078">
    <property type="entry name" value="Ribosomal_L11_MeTrfase_PrmA"/>
</dbReference>
<dbReference type="InterPro" id="IPR004498">
    <property type="entry name" value="Ribosomal_PrmA_MeTrfase"/>
</dbReference>
<dbReference type="InterPro" id="IPR029063">
    <property type="entry name" value="SAM-dependent_MTases_sf"/>
</dbReference>
<dbReference type="NCBIfam" id="NF001786">
    <property type="entry name" value="PRK00517.2-4"/>
    <property type="match status" value="1"/>
</dbReference>
<dbReference type="PANTHER" id="PTHR43648">
    <property type="entry name" value="ELECTRON TRANSFER FLAVOPROTEIN BETA SUBUNIT LYSINE METHYLTRANSFERASE"/>
    <property type="match status" value="1"/>
</dbReference>
<dbReference type="PANTHER" id="PTHR43648:SF1">
    <property type="entry name" value="ELECTRON TRANSFER FLAVOPROTEIN BETA SUBUNIT LYSINE METHYLTRANSFERASE"/>
    <property type="match status" value="1"/>
</dbReference>
<dbReference type="Pfam" id="PF06325">
    <property type="entry name" value="PrmA"/>
    <property type="match status" value="1"/>
</dbReference>
<dbReference type="PIRSF" id="PIRSF000401">
    <property type="entry name" value="RPL11_MTase"/>
    <property type="match status" value="1"/>
</dbReference>
<dbReference type="SUPFAM" id="SSF53335">
    <property type="entry name" value="S-adenosyl-L-methionine-dependent methyltransferases"/>
    <property type="match status" value="1"/>
</dbReference>
<protein>
    <recommendedName>
        <fullName evidence="1">Ribosomal protein L11 methyltransferase</fullName>
        <shortName evidence="1">L11 Mtase</shortName>
        <ecNumber evidence="1">2.1.1.-</ecNumber>
    </recommendedName>
</protein>
<comment type="function">
    <text evidence="1">Methylates ribosomal protein L11.</text>
</comment>
<comment type="catalytic activity">
    <reaction evidence="1">
        <text>L-lysyl-[protein] + 3 S-adenosyl-L-methionine = N(6),N(6),N(6)-trimethyl-L-lysyl-[protein] + 3 S-adenosyl-L-homocysteine + 3 H(+)</text>
        <dbReference type="Rhea" id="RHEA:54192"/>
        <dbReference type="Rhea" id="RHEA-COMP:9752"/>
        <dbReference type="Rhea" id="RHEA-COMP:13826"/>
        <dbReference type="ChEBI" id="CHEBI:15378"/>
        <dbReference type="ChEBI" id="CHEBI:29969"/>
        <dbReference type="ChEBI" id="CHEBI:57856"/>
        <dbReference type="ChEBI" id="CHEBI:59789"/>
        <dbReference type="ChEBI" id="CHEBI:61961"/>
    </reaction>
</comment>
<comment type="subcellular location">
    <subcellularLocation>
        <location evidence="1">Cytoplasm</location>
    </subcellularLocation>
</comment>
<comment type="similarity">
    <text evidence="1">Belongs to the methyltransferase superfamily. PrmA family.</text>
</comment>
<feature type="chain" id="PRO_1000192598" description="Ribosomal protein L11 methyltransferase">
    <location>
        <begin position="1"/>
        <end position="278"/>
    </location>
</feature>
<feature type="binding site" evidence="1">
    <location>
        <position position="131"/>
    </location>
    <ligand>
        <name>S-adenosyl-L-methionine</name>
        <dbReference type="ChEBI" id="CHEBI:59789"/>
    </ligand>
</feature>
<feature type="binding site" evidence="1">
    <location>
        <position position="152"/>
    </location>
    <ligand>
        <name>S-adenosyl-L-methionine</name>
        <dbReference type="ChEBI" id="CHEBI:59789"/>
    </ligand>
</feature>
<feature type="binding site" evidence="1">
    <location>
        <position position="173"/>
    </location>
    <ligand>
        <name>S-adenosyl-L-methionine</name>
        <dbReference type="ChEBI" id="CHEBI:59789"/>
    </ligand>
</feature>
<feature type="binding site" evidence="1">
    <location>
        <position position="214"/>
    </location>
    <ligand>
        <name>S-adenosyl-L-methionine</name>
        <dbReference type="ChEBI" id="CHEBI:59789"/>
    </ligand>
</feature>
<organism>
    <name type="scientific">Campylobacter lari (strain RM2100 / D67 / ATCC BAA-1060)</name>
    <dbReference type="NCBI Taxonomy" id="306263"/>
    <lineage>
        <taxon>Bacteria</taxon>
        <taxon>Pseudomonadati</taxon>
        <taxon>Campylobacterota</taxon>
        <taxon>Epsilonproteobacteria</taxon>
        <taxon>Campylobacterales</taxon>
        <taxon>Campylobacteraceae</taxon>
        <taxon>Campylobacter</taxon>
    </lineage>
</organism>
<reference key="1">
    <citation type="journal article" date="2008" name="Foodborne Pathog. Dis.">
        <title>The complete genome sequence and analysis of the human pathogen Campylobacter lari.</title>
        <authorList>
            <person name="Miller W.G."/>
            <person name="Wang G."/>
            <person name="Binnewies T.T."/>
            <person name="Parker C.T."/>
        </authorList>
    </citation>
    <scope>NUCLEOTIDE SEQUENCE [LARGE SCALE GENOMIC DNA]</scope>
    <source>
        <strain>RM2100 / D67 / ATCC BAA-1060</strain>
    </source>
</reference>
<name>PRMA_CAMLR</name>
<proteinExistence type="inferred from homology"/>